<keyword id="KW-0002">3D-structure</keyword>
<keyword id="KW-0007">Acetylation</keyword>
<keyword id="KW-0025">Alternative splicing</keyword>
<keyword id="KW-0067">ATP-binding</keyword>
<keyword id="KW-1003">Cell membrane</keyword>
<keyword id="KW-0963">Cytoplasm</keyword>
<keyword id="KW-0347">Helicase</keyword>
<keyword id="KW-0945">Host-virus interaction</keyword>
<keyword id="KW-0378">Hydrolase</keyword>
<keyword id="KW-0396">Initiation factor</keyword>
<keyword id="KW-1017">Isopeptide bond</keyword>
<keyword id="KW-0472">Membrane</keyword>
<keyword id="KW-0547">Nucleotide-binding</keyword>
<keyword id="KW-0597">Phosphoprotein</keyword>
<keyword id="KW-0648">Protein biosynthesis</keyword>
<keyword id="KW-1267">Proteomics identification</keyword>
<keyword id="KW-1185">Reference proteome</keyword>
<keyword id="KW-0694">RNA-binding</keyword>
<keyword id="KW-0832">Ubl conjugation</keyword>
<sequence length="406" mass="46154">MSASQDSRSRDNGPDGMEPEGVIESNWNEIVDSFDDMNLSESLLRGIYAYGFEKPSAIQQRAILPCIKGYDVIAQAQSGTGKTATFAISILQQIELDLKATQALVLAPTRELAQQIQKVVMALGDYMGASCHACIGGTNVRAEVQKLQMEAPHIIVGTPGRVFDMLNRRYLSPKYIKMFVLDEADEMLSRGFKDQIYDIFQKLNSNTQVVLLSATMPSDVLEVTKKFMRDPIRILVKKEELTLEGIRQFYINVEREEWKLDTLCDLYETLTITQAVIFINTRRKVDWLTEKMHARDFTVSAMHGDMDQKERDVIMREFRSGSSRVLITTDLLARGIDVQQVSLVINYDLPTNRENYIHRIGRGGRFGRKGVAINMVTEEDKRTLRDIETFYNTSIEEMPLNVADLI</sequence>
<dbReference type="EC" id="3.6.4.13"/>
<dbReference type="EMBL" id="D13748">
    <property type="protein sequence ID" value="BAA02897.1"/>
    <property type="molecule type" value="mRNA"/>
</dbReference>
<dbReference type="EMBL" id="BT019880">
    <property type="protein sequence ID" value="AAV38683.1"/>
    <property type="molecule type" value="mRNA"/>
</dbReference>
<dbReference type="EMBL" id="BT019881">
    <property type="protein sequence ID" value="AAV38684.1"/>
    <property type="molecule type" value="mRNA"/>
</dbReference>
<dbReference type="EMBL" id="AK312630">
    <property type="protein sequence ID" value="BAG35515.1"/>
    <property type="molecule type" value="mRNA"/>
</dbReference>
<dbReference type="EMBL" id="AC016876">
    <property type="status" value="NOT_ANNOTATED_CDS"/>
    <property type="molecule type" value="Genomic_DNA"/>
</dbReference>
<dbReference type="EMBL" id="CH471108">
    <property type="protein sequence ID" value="EAW90167.1"/>
    <property type="molecule type" value="Genomic_DNA"/>
</dbReference>
<dbReference type="EMBL" id="CH471108">
    <property type="protein sequence ID" value="EAW90168.1"/>
    <property type="molecule type" value="Genomic_DNA"/>
</dbReference>
<dbReference type="EMBL" id="CH471108">
    <property type="protein sequence ID" value="EAW90169.1"/>
    <property type="molecule type" value="Genomic_DNA"/>
</dbReference>
<dbReference type="EMBL" id="BC006210">
    <property type="status" value="NOT_ANNOTATED_CDS"/>
    <property type="molecule type" value="mRNA"/>
</dbReference>
<dbReference type="EMBL" id="BC009585">
    <property type="protein sequence ID" value="AAH09585.1"/>
    <property type="molecule type" value="mRNA"/>
</dbReference>
<dbReference type="EMBL" id="BC073752">
    <property type="protein sequence ID" value="AAH73752.1"/>
    <property type="molecule type" value="mRNA"/>
</dbReference>
<dbReference type="CCDS" id="CCDS11113.1">
    <molecule id="P60842-1"/>
</dbReference>
<dbReference type="CCDS" id="CCDS58511.1">
    <molecule id="P60842-2"/>
</dbReference>
<dbReference type="PIR" id="S33681">
    <property type="entry name" value="S33681"/>
</dbReference>
<dbReference type="RefSeq" id="NP_001191439.1">
    <molecule id="P60842-2"/>
    <property type="nucleotide sequence ID" value="NM_001204510.2"/>
</dbReference>
<dbReference type="RefSeq" id="NP_001407.1">
    <molecule id="P60842-1"/>
    <property type="nucleotide sequence ID" value="NM_001416.4"/>
</dbReference>
<dbReference type="PDB" id="2G9N">
    <property type="method" value="X-ray"/>
    <property type="resolution" value="2.25 A"/>
    <property type="chains" value="A/B=20-238"/>
</dbReference>
<dbReference type="PDB" id="2ZU6">
    <property type="method" value="X-ray"/>
    <property type="resolution" value="2.80 A"/>
    <property type="chains" value="A/C/D/F=20-406"/>
</dbReference>
<dbReference type="PDB" id="3EIQ">
    <property type="method" value="X-ray"/>
    <property type="resolution" value="3.50 A"/>
    <property type="chains" value="A/D=1-406"/>
</dbReference>
<dbReference type="PDB" id="5ZBZ">
    <property type="method" value="X-ray"/>
    <property type="resolution" value="1.31 A"/>
    <property type="chains" value="A=20-238"/>
</dbReference>
<dbReference type="PDB" id="5ZC9">
    <property type="method" value="X-ray"/>
    <property type="resolution" value="2.00 A"/>
    <property type="chains" value="A=19-406"/>
</dbReference>
<dbReference type="PDB" id="6ZMW">
    <property type="method" value="EM"/>
    <property type="resolution" value="3.70 A"/>
    <property type="chains" value="j=1-406"/>
</dbReference>
<dbReference type="PDB" id="7PPZ">
    <property type="method" value="X-ray"/>
    <property type="resolution" value="2.52 A"/>
    <property type="chains" value="B=20-406"/>
</dbReference>
<dbReference type="PDB" id="7PQ0">
    <property type="method" value="X-ray"/>
    <property type="resolution" value="3.00 A"/>
    <property type="chains" value="B=20-406"/>
</dbReference>
<dbReference type="PDB" id="8HUJ">
    <property type="method" value="EM"/>
    <property type="resolution" value="3.76 A"/>
    <property type="chains" value="A=2-406"/>
</dbReference>
<dbReference type="PDB" id="8OZ0">
    <property type="method" value="EM"/>
    <property type="resolution" value="3.50 A"/>
    <property type="chains" value="1/3=1-406"/>
</dbReference>
<dbReference type="PDB" id="8XXN">
    <property type="method" value="EM"/>
    <property type="resolution" value="3.60 A"/>
    <property type="chains" value="4A=1-406"/>
</dbReference>
<dbReference type="PDB" id="9AVR">
    <property type="method" value="X-ray"/>
    <property type="resolution" value="1.91 A"/>
    <property type="chains" value="A=1-406"/>
</dbReference>
<dbReference type="PDB" id="9BLN">
    <property type="method" value="EM"/>
    <property type="resolution" value="3.90 A"/>
    <property type="chains" value="l=20-406"/>
</dbReference>
<dbReference type="PDB" id="9DTS">
    <property type="method" value="X-ray"/>
    <property type="resolution" value="1.69 A"/>
    <property type="chains" value="A/B/C/D=21-406"/>
</dbReference>
<dbReference type="PDBsum" id="2G9N"/>
<dbReference type="PDBsum" id="2ZU6"/>
<dbReference type="PDBsum" id="3EIQ"/>
<dbReference type="PDBsum" id="5ZBZ"/>
<dbReference type="PDBsum" id="5ZC9"/>
<dbReference type="PDBsum" id="6ZMW"/>
<dbReference type="PDBsum" id="7PPZ"/>
<dbReference type="PDBsum" id="7PQ0"/>
<dbReference type="PDBsum" id="8HUJ"/>
<dbReference type="PDBsum" id="8OZ0"/>
<dbReference type="PDBsum" id="8XXN"/>
<dbReference type="PDBsum" id="9AVR"/>
<dbReference type="PDBsum" id="9BLN"/>
<dbReference type="PDBsum" id="9DTS"/>
<dbReference type="EMDB" id="EMD-11302"/>
<dbReference type="EMDB" id="EMD-17297"/>
<dbReference type="EMDB" id="EMD-35041"/>
<dbReference type="EMDB" id="EMD-38754"/>
<dbReference type="EMDB" id="EMD-44671"/>
<dbReference type="SASBDB" id="P60842"/>
<dbReference type="SMR" id="P60842"/>
<dbReference type="BioGRID" id="108289">
    <property type="interactions" value="371"/>
</dbReference>
<dbReference type="ComplexPortal" id="CPX-2666">
    <property type="entry name" value="Eukaryotic translation initiation factor 4F, EIF4A1 and EIF4G1 variant"/>
</dbReference>
<dbReference type="ComplexPortal" id="CPX-5635">
    <property type="entry name" value="Eukaryotic translation initiation factor 4F, EIF4A1 and EIF4G3 variant"/>
</dbReference>
<dbReference type="CORUM" id="P60842"/>
<dbReference type="DIP" id="DIP-29755N"/>
<dbReference type="FunCoup" id="P60842">
    <property type="interactions" value="2313"/>
</dbReference>
<dbReference type="IntAct" id="P60842">
    <property type="interactions" value="152"/>
</dbReference>
<dbReference type="MINT" id="P60842"/>
<dbReference type="STRING" id="9606.ENSP00000293831"/>
<dbReference type="BindingDB" id="P60842"/>
<dbReference type="ChEMBL" id="CHEMBL2052028"/>
<dbReference type="DrugBank" id="DB09130">
    <property type="generic name" value="Copper"/>
</dbReference>
<dbReference type="SwissLipids" id="SLP:000001628"/>
<dbReference type="GlyCosmos" id="P60842">
    <property type="glycosylation" value="2 sites, 1 glycan"/>
</dbReference>
<dbReference type="GlyGen" id="P60842">
    <property type="glycosylation" value="2 sites, 1 O-linked glycan (2 sites)"/>
</dbReference>
<dbReference type="iPTMnet" id="P60842"/>
<dbReference type="MetOSite" id="P60842"/>
<dbReference type="PhosphoSitePlus" id="P60842"/>
<dbReference type="SwissPalm" id="P60842"/>
<dbReference type="BioMuta" id="EIF4A1"/>
<dbReference type="DMDM" id="46397463"/>
<dbReference type="jPOST" id="P60842"/>
<dbReference type="MassIVE" id="P60842"/>
<dbReference type="PaxDb" id="9606-ENSP00000293831"/>
<dbReference type="PeptideAtlas" id="P60842"/>
<dbReference type="PRIDE" id="P60842"/>
<dbReference type="ProteomicsDB" id="57227">
    <molecule id="P60842-1"/>
</dbReference>
<dbReference type="Pumba" id="P60842"/>
<dbReference type="TopDownProteomics" id="P60842-1">
    <molecule id="P60842-1"/>
</dbReference>
<dbReference type="Antibodypedia" id="24168">
    <property type="antibodies" value="232 antibodies from 27 providers"/>
</dbReference>
<dbReference type="DNASU" id="1973"/>
<dbReference type="Ensembl" id="ENST00000293831.13">
    <molecule id="P60842-1"/>
    <property type="protein sequence ID" value="ENSP00000293831.8"/>
    <property type="gene ID" value="ENSG00000161960.16"/>
</dbReference>
<dbReference type="Ensembl" id="ENST00000577269.5">
    <molecule id="P60842-2"/>
    <property type="protein sequence ID" value="ENSP00000463486.1"/>
    <property type="gene ID" value="ENSG00000161960.16"/>
</dbReference>
<dbReference type="GeneID" id="1973"/>
<dbReference type="KEGG" id="hsa:1973"/>
<dbReference type="MANE-Select" id="ENST00000293831.13">
    <property type="protein sequence ID" value="ENSP00000293831.8"/>
    <property type="RefSeq nucleotide sequence ID" value="NM_001416.4"/>
    <property type="RefSeq protein sequence ID" value="NP_001407.1"/>
</dbReference>
<dbReference type="UCSC" id="uc002ghr.2">
    <molecule id="P60842-1"/>
    <property type="organism name" value="human"/>
</dbReference>
<dbReference type="AGR" id="HGNC:3282"/>
<dbReference type="CTD" id="1973"/>
<dbReference type="DisGeNET" id="1973"/>
<dbReference type="GeneCards" id="EIF4A1"/>
<dbReference type="HGNC" id="HGNC:3282">
    <property type="gene designation" value="EIF4A1"/>
</dbReference>
<dbReference type="HPA" id="ENSG00000161960">
    <property type="expression patterns" value="Low tissue specificity"/>
</dbReference>
<dbReference type="MalaCards" id="EIF4A1"/>
<dbReference type="MIM" id="602641">
    <property type="type" value="gene"/>
</dbReference>
<dbReference type="neXtProt" id="NX_P60842"/>
<dbReference type="OpenTargets" id="ENSG00000161960"/>
<dbReference type="PharmGKB" id="PA27710"/>
<dbReference type="VEuPathDB" id="HostDB:ENSG00000161960"/>
<dbReference type="eggNOG" id="KOG0327">
    <property type="taxonomic scope" value="Eukaryota"/>
</dbReference>
<dbReference type="GeneTree" id="ENSGT00940000153889"/>
<dbReference type="HOGENOM" id="CLU_003041_1_0_1"/>
<dbReference type="InParanoid" id="P60842"/>
<dbReference type="OMA" id="DTIHGDK"/>
<dbReference type="OrthoDB" id="10265785at2759"/>
<dbReference type="PAN-GO" id="P60842">
    <property type="GO annotations" value="2 GO annotations based on evolutionary models"/>
</dbReference>
<dbReference type="PhylomeDB" id="P60842"/>
<dbReference type="TreeFam" id="TF101524"/>
<dbReference type="PathwayCommons" id="P60842"/>
<dbReference type="Reactome" id="R-HSA-1169408">
    <property type="pathway name" value="ISG15 antiviral mechanism"/>
</dbReference>
<dbReference type="Reactome" id="R-HSA-156827">
    <property type="pathway name" value="L13a-mediated translational silencing of Ceruloplasmin expression"/>
</dbReference>
<dbReference type="Reactome" id="R-HSA-429947">
    <property type="pathway name" value="Deadenylation of mRNA"/>
</dbReference>
<dbReference type="Reactome" id="R-HSA-72649">
    <property type="pathway name" value="Translation initiation complex formation"/>
</dbReference>
<dbReference type="Reactome" id="R-HSA-72662">
    <property type="pathway name" value="Activation of the mRNA upon binding of the cap-binding complex and eIFs, and subsequent binding to 43S"/>
</dbReference>
<dbReference type="Reactome" id="R-HSA-72702">
    <property type="pathway name" value="Ribosomal scanning and start codon recognition"/>
</dbReference>
<dbReference type="Reactome" id="R-HSA-72706">
    <property type="pathway name" value="GTP hydrolysis and joining of the 60S ribosomal subunit"/>
</dbReference>
<dbReference type="Reactome" id="R-HSA-9820841">
    <property type="pathway name" value="M-decay: degradation of maternal mRNAs by maternally stored factors"/>
</dbReference>
<dbReference type="Reactome" id="R-HSA-9820865">
    <property type="pathway name" value="Z-decay: degradation of maternal mRNAs by zygotically expressed factors"/>
</dbReference>
<dbReference type="SignaLink" id="P60842"/>
<dbReference type="SIGNOR" id="P60842"/>
<dbReference type="BioGRID-ORCS" id="1973">
    <property type="hits" value="771 hits in 1175 CRISPR screens"/>
</dbReference>
<dbReference type="CD-CODE" id="91857CE7">
    <property type="entry name" value="Nucleolus"/>
</dbReference>
<dbReference type="CD-CODE" id="DEE660B4">
    <property type="entry name" value="Stress granule"/>
</dbReference>
<dbReference type="EvolutionaryTrace" id="P60842"/>
<dbReference type="GeneWiki" id="EIF4A1"/>
<dbReference type="GenomeRNAi" id="1973"/>
<dbReference type="Pharos" id="P60842">
    <property type="development level" value="Tchem"/>
</dbReference>
<dbReference type="PRO" id="PR:P60842"/>
<dbReference type="Proteomes" id="UP000005640">
    <property type="component" value="Chromosome 17"/>
</dbReference>
<dbReference type="RNAct" id="P60842">
    <property type="molecule type" value="protein"/>
</dbReference>
<dbReference type="Bgee" id="ENSG00000161960">
    <property type="expression patterns" value="Expressed in colonic epithelium and 104 other cell types or tissues"/>
</dbReference>
<dbReference type="ExpressionAtlas" id="P60842">
    <property type="expression patterns" value="baseline and differential"/>
</dbReference>
<dbReference type="GO" id="GO:0005737">
    <property type="term" value="C:cytoplasm"/>
    <property type="evidence" value="ECO:0000314"/>
    <property type="project" value="UniProtKB"/>
</dbReference>
<dbReference type="GO" id="GO:0010494">
    <property type="term" value="C:cytoplasmic stress granule"/>
    <property type="evidence" value="ECO:0007669"/>
    <property type="project" value="UniProtKB-SubCell"/>
</dbReference>
<dbReference type="GO" id="GO:0005829">
    <property type="term" value="C:cytosol"/>
    <property type="evidence" value="ECO:0000304"/>
    <property type="project" value="Reactome"/>
</dbReference>
<dbReference type="GO" id="GO:0016281">
    <property type="term" value="C:eukaryotic translation initiation factor 4F complex"/>
    <property type="evidence" value="ECO:0000304"/>
    <property type="project" value="UniProtKB"/>
</dbReference>
<dbReference type="GO" id="GO:0070062">
    <property type="term" value="C:extracellular exosome"/>
    <property type="evidence" value="ECO:0007005"/>
    <property type="project" value="UniProtKB"/>
</dbReference>
<dbReference type="GO" id="GO:0016020">
    <property type="term" value="C:membrane"/>
    <property type="evidence" value="ECO:0007005"/>
    <property type="project" value="UniProtKB"/>
</dbReference>
<dbReference type="GO" id="GO:0097165">
    <property type="term" value="C:nuclear stress granule"/>
    <property type="evidence" value="ECO:0000314"/>
    <property type="project" value="UniProtKB"/>
</dbReference>
<dbReference type="GO" id="GO:0048471">
    <property type="term" value="C:perinuclear region of cytoplasm"/>
    <property type="evidence" value="ECO:0000314"/>
    <property type="project" value="UniProtKB"/>
</dbReference>
<dbReference type="GO" id="GO:0005886">
    <property type="term" value="C:plasma membrane"/>
    <property type="evidence" value="ECO:0000314"/>
    <property type="project" value="UniProtKB"/>
</dbReference>
<dbReference type="GO" id="GO:0005524">
    <property type="term" value="F:ATP binding"/>
    <property type="evidence" value="ECO:0007669"/>
    <property type="project" value="UniProtKB-KW"/>
</dbReference>
<dbReference type="GO" id="GO:0016887">
    <property type="term" value="F:ATP hydrolysis activity"/>
    <property type="evidence" value="ECO:0007669"/>
    <property type="project" value="RHEA"/>
</dbReference>
<dbReference type="GO" id="GO:0003725">
    <property type="term" value="F:double-stranded RNA binding"/>
    <property type="evidence" value="ECO:0000314"/>
    <property type="project" value="MGI"/>
</dbReference>
<dbReference type="GO" id="GO:0004386">
    <property type="term" value="F:helicase activity"/>
    <property type="evidence" value="ECO:0000304"/>
    <property type="project" value="UniProtKB"/>
</dbReference>
<dbReference type="GO" id="GO:0003729">
    <property type="term" value="F:mRNA binding"/>
    <property type="evidence" value="ECO:0000304"/>
    <property type="project" value="UniProtKB"/>
</dbReference>
<dbReference type="GO" id="GO:0003723">
    <property type="term" value="F:RNA binding"/>
    <property type="evidence" value="ECO:0007005"/>
    <property type="project" value="UniProtKB"/>
</dbReference>
<dbReference type="GO" id="GO:0000339">
    <property type="term" value="F:RNA cap binding"/>
    <property type="evidence" value="ECO:0000304"/>
    <property type="project" value="UniProtKB"/>
</dbReference>
<dbReference type="GO" id="GO:0003724">
    <property type="term" value="F:RNA helicase activity"/>
    <property type="evidence" value="ECO:0007669"/>
    <property type="project" value="UniProtKB-EC"/>
</dbReference>
<dbReference type="GO" id="GO:0008135">
    <property type="term" value="F:translation factor activity, RNA binding"/>
    <property type="evidence" value="ECO:0000304"/>
    <property type="project" value="UniProtKB"/>
</dbReference>
<dbReference type="GO" id="GO:0003743">
    <property type="term" value="F:translation initiation factor activity"/>
    <property type="evidence" value="ECO:0000314"/>
    <property type="project" value="UniProt"/>
</dbReference>
<dbReference type="GO" id="GO:0002183">
    <property type="term" value="P:cytoplasmic translational initiation"/>
    <property type="evidence" value="ECO:0000314"/>
    <property type="project" value="UniProt"/>
</dbReference>
<dbReference type="GO" id="GO:0045944">
    <property type="term" value="P:positive regulation of transcription by RNA polymerase II"/>
    <property type="evidence" value="ECO:0000315"/>
    <property type="project" value="UniProtKB"/>
</dbReference>
<dbReference type="GO" id="GO:0006413">
    <property type="term" value="P:translational initiation"/>
    <property type="evidence" value="ECO:0000303"/>
    <property type="project" value="ComplexPortal"/>
</dbReference>
<dbReference type="CDD" id="cd18046">
    <property type="entry name" value="DEADc_EIF4AII_EIF4AI_DDX2"/>
    <property type="match status" value="1"/>
</dbReference>
<dbReference type="CDD" id="cd18787">
    <property type="entry name" value="SF2_C_DEAD"/>
    <property type="match status" value="1"/>
</dbReference>
<dbReference type="FunFam" id="3.40.50.300:FF:000089">
    <property type="entry name" value="Eukaryotic initiation factor 4A-II"/>
    <property type="match status" value="1"/>
</dbReference>
<dbReference type="FunFam" id="3.40.50.300:FF:000031">
    <property type="entry name" value="Eukaryotic initiation factor 4A-III"/>
    <property type="match status" value="1"/>
</dbReference>
<dbReference type="Gene3D" id="3.40.50.300">
    <property type="entry name" value="P-loop containing nucleotide triphosphate hydrolases"/>
    <property type="match status" value="2"/>
</dbReference>
<dbReference type="InterPro" id="IPR011545">
    <property type="entry name" value="DEAD/DEAH_box_helicase_dom"/>
</dbReference>
<dbReference type="InterPro" id="IPR044728">
    <property type="entry name" value="EIF4A_DEADc"/>
</dbReference>
<dbReference type="InterPro" id="IPR014001">
    <property type="entry name" value="Helicase_ATP-bd"/>
</dbReference>
<dbReference type="InterPro" id="IPR001650">
    <property type="entry name" value="Helicase_C-like"/>
</dbReference>
<dbReference type="InterPro" id="IPR027417">
    <property type="entry name" value="P-loop_NTPase"/>
</dbReference>
<dbReference type="InterPro" id="IPR000629">
    <property type="entry name" value="RNA-helicase_DEAD-box_CS"/>
</dbReference>
<dbReference type="InterPro" id="IPR014014">
    <property type="entry name" value="RNA_helicase_DEAD_Q_motif"/>
</dbReference>
<dbReference type="PANTHER" id="PTHR47958">
    <property type="entry name" value="ATP-DEPENDENT RNA HELICASE DBP3"/>
    <property type="match status" value="1"/>
</dbReference>
<dbReference type="Pfam" id="PF00270">
    <property type="entry name" value="DEAD"/>
    <property type="match status" value="1"/>
</dbReference>
<dbReference type="Pfam" id="PF00271">
    <property type="entry name" value="Helicase_C"/>
    <property type="match status" value="1"/>
</dbReference>
<dbReference type="SMART" id="SM00487">
    <property type="entry name" value="DEXDc"/>
    <property type="match status" value="1"/>
</dbReference>
<dbReference type="SMART" id="SM00490">
    <property type="entry name" value="HELICc"/>
    <property type="match status" value="1"/>
</dbReference>
<dbReference type="SUPFAM" id="SSF52540">
    <property type="entry name" value="P-loop containing nucleoside triphosphate hydrolases"/>
    <property type="match status" value="1"/>
</dbReference>
<dbReference type="PROSITE" id="PS00039">
    <property type="entry name" value="DEAD_ATP_HELICASE"/>
    <property type="match status" value="1"/>
</dbReference>
<dbReference type="PROSITE" id="PS51192">
    <property type="entry name" value="HELICASE_ATP_BIND_1"/>
    <property type="match status" value="1"/>
</dbReference>
<dbReference type="PROSITE" id="PS51194">
    <property type="entry name" value="HELICASE_CTER"/>
    <property type="match status" value="1"/>
</dbReference>
<dbReference type="PROSITE" id="PS51195">
    <property type="entry name" value="Q_MOTIF"/>
    <property type="match status" value="1"/>
</dbReference>
<reference key="1">
    <citation type="journal article" date="1993" name="Nucleic Acids Res.">
        <title>Nucleotide sequence of human cDNA encoding eukaryotic initiation factor 4AI.</title>
        <authorList>
            <person name="Kim N.-S."/>
            <person name="Kato T."/>
            <person name="Abe N."/>
            <person name="Kato S."/>
        </authorList>
    </citation>
    <scope>NUCLEOTIDE SEQUENCE [MRNA] (ISOFORM 1)</scope>
</reference>
<reference key="2">
    <citation type="submission" date="2004-10" db="EMBL/GenBank/DDBJ databases">
        <title>Cloning of human full-length CDSs in BD Creator(TM) system donor vector.</title>
        <authorList>
            <person name="Kalnine N."/>
            <person name="Chen X."/>
            <person name="Rolfs A."/>
            <person name="Halleck A."/>
            <person name="Hines L."/>
            <person name="Eisenstein S."/>
            <person name="Koundinya M."/>
            <person name="Raphael J."/>
            <person name="Moreira D."/>
            <person name="Kelley T."/>
            <person name="LaBaer J."/>
            <person name="Lin Y."/>
            <person name="Phelan M."/>
            <person name="Farmer A."/>
        </authorList>
    </citation>
    <scope>NUCLEOTIDE SEQUENCE [LARGE SCALE MRNA] (ISOFORM 1)</scope>
</reference>
<reference key="3">
    <citation type="journal article" date="2004" name="Nat. Genet.">
        <title>Complete sequencing and characterization of 21,243 full-length human cDNAs.</title>
        <authorList>
            <person name="Ota T."/>
            <person name="Suzuki Y."/>
            <person name="Nishikawa T."/>
            <person name="Otsuki T."/>
            <person name="Sugiyama T."/>
            <person name="Irie R."/>
            <person name="Wakamatsu A."/>
            <person name="Hayashi K."/>
            <person name="Sato H."/>
            <person name="Nagai K."/>
            <person name="Kimura K."/>
            <person name="Makita H."/>
            <person name="Sekine M."/>
            <person name="Obayashi M."/>
            <person name="Nishi T."/>
            <person name="Shibahara T."/>
            <person name="Tanaka T."/>
            <person name="Ishii S."/>
            <person name="Yamamoto J."/>
            <person name="Saito K."/>
            <person name="Kawai Y."/>
            <person name="Isono Y."/>
            <person name="Nakamura Y."/>
            <person name="Nagahari K."/>
            <person name="Murakami K."/>
            <person name="Yasuda T."/>
            <person name="Iwayanagi T."/>
            <person name="Wagatsuma M."/>
            <person name="Shiratori A."/>
            <person name="Sudo H."/>
            <person name="Hosoiri T."/>
            <person name="Kaku Y."/>
            <person name="Kodaira H."/>
            <person name="Kondo H."/>
            <person name="Sugawara M."/>
            <person name="Takahashi M."/>
            <person name="Kanda K."/>
            <person name="Yokoi T."/>
            <person name="Furuya T."/>
            <person name="Kikkawa E."/>
            <person name="Omura Y."/>
            <person name="Abe K."/>
            <person name="Kamihara K."/>
            <person name="Katsuta N."/>
            <person name="Sato K."/>
            <person name="Tanikawa M."/>
            <person name="Yamazaki M."/>
            <person name="Ninomiya K."/>
            <person name="Ishibashi T."/>
            <person name="Yamashita H."/>
            <person name="Murakawa K."/>
            <person name="Fujimori K."/>
            <person name="Tanai H."/>
            <person name="Kimata M."/>
            <person name="Watanabe M."/>
            <person name="Hiraoka S."/>
            <person name="Chiba Y."/>
            <person name="Ishida S."/>
            <person name="Ono Y."/>
            <person name="Takiguchi S."/>
            <person name="Watanabe S."/>
            <person name="Yosida M."/>
            <person name="Hotuta T."/>
            <person name="Kusano J."/>
            <person name="Kanehori K."/>
            <person name="Takahashi-Fujii A."/>
            <person name="Hara H."/>
            <person name="Tanase T.-O."/>
            <person name="Nomura Y."/>
            <person name="Togiya S."/>
            <person name="Komai F."/>
            <person name="Hara R."/>
            <person name="Takeuchi K."/>
            <person name="Arita M."/>
            <person name="Imose N."/>
            <person name="Musashino K."/>
            <person name="Yuuki H."/>
            <person name="Oshima A."/>
            <person name="Sasaki N."/>
            <person name="Aotsuka S."/>
            <person name="Yoshikawa Y."/>
            <person name="Matsunawa H."/>
            <person name="Ichihara T."/>
            <person name="Shiohata N."/>
            <person name="Sano S."/>
            <person name="Moriya S."/>
            <person name="Momiyama H."/>
            <person name="Satoh N."/>
            <person name="Takami S."/>
            <person name="Terashima Y."/>
            <person name="Suzuki O."/>
            <person name="Nakagawa S."/>
            <person name="Senoh A."/>
            <person name="Mizoguchi H."/>
            <person name="Goto Y."/>
            <person name="Shimizu F."/>
            <person name="Wakebe H."/>
            <person name="Hishigaki H."/>
            <person name="Watanabe T."/>
            <person name="Sugiyama A."/>
            <person name="Takemoto M."/>
            <person name="Kawakami B."/>
            <person name="Yamazaki M."/>
            <person name="Watanabe K."/>
            <person name="Kumagai A."/>
            <person name="Itakura S."/>
            <person name="Fukuzumi Y."/>
            <person name="Fujimori Y."/>
            <person name="Komiyama M."/>
            <person name="Tashiro H."/>
            <person name="Tanigami A."/>
            <person name="Fujiwara T."/>
            <person name="Ono T."/>
            <person name="Yamada K."/>
            <person name="Fujii Y."/>
            <person name="Ozaki K."/>
            <person name="Hirao M."/>
            <person name="Ohmori Y."/>
            <person name="Kawabata A."/>
            <person name="Hikiji T."/>
            <person name="Kobatake N."/>
            <person name="Inagaki H."/>
            <person name="Ikema Y."/>
            <person name="Okamoto S."/>
            <person name="Okitani R."/>
            <person name="Kawakami T."/>
            <person name="Noguchi S."/>
            <person name="Itoh T."/>
            <person name="Shigeta K."/>
            <person name="Senba T."/>
            <person name="Matsumura K."/>
            <person name="Nakajima Y."/>
            <person name="Mizuno T."/>
            <person name="Morinaga M."/>
            <person name="Sasaki M."/>
            <person name="Togashi T."/>
            <person name="Oyama M."/>
            <person name="Hata H."/>
            <person name="Watanabe M."/>
            <person name="Komatsu T."/>
            <person name="Mizushima-Sugano J."/>
            <person name="Satoh T."/>
            <person name="Shirai Y."/>
            <person name="Takahashi Y."/>
            <person name="Nakagawa K."/>
            <person name="Okumura K."/>
            <person name="Nagase T."/>
            <person name="Nomura N."/>
            <person name="Kikuchi H."/>
            <person name="Masuho Y."/>
            <person name="Yamashita R."/>
            <person name="Nakai K."/>
            <person name="Yada T."/>
            <person name="Nakamura Y."/>
            <person name="Ohara O."/>
            <person name="Isogai T."/>
            <person name="Sugano S."/>
        </authorList>
    </citation>
    <scope>NUCLEOTIDE SEQUENCE [LARGE SCALE MRNA] (ISOFORM 1)</scope>
    <source>
        <tissue>Heart</tissue>
    </source>
</reference>
<reference key="4">
    <citation type="journal article" date="2006" name="Nature">
        <title>DNA sequence of human chromosome 17 and analysis of rearrangement in the human lineage.</title>
        <authorList>
            <person name="Zody M.C."/>
            <person name="Garber M."/>
            <person name="Adams D.J."/>
            <person name="Sharpe T."/>
            <person name="Harrow J."/>
            <person name="Lupski J.R."/>
            <person name="Nicholson C."/>
            <person name="Searle S.M."/>
            <person name="Wilming L."/>
            <person name="Young S.K."/>
            <person name="Abouelleil A."/>
            <person name="Allen N.R."/>
            <person name="Bi W."/>
            <person name="Bloom T."/>
            <person name="Borowsky M.L."/>
            <person name="Bugalter B.E."/>
            <person name="Butler J."/>
            <person name="Chang J.L."/>
            <person name="Chen C.-K."/>
            <person name="Cook A."/>
            <person name="Corum B."/>
            <person name="Cuomo C.A."/>
            <person name="de Jong P.J."/>
            <person name="DeCaprio D."/>
            <person name="Dewar K."/>
            <person name="FitzGerald M."/>
            <person name="Gilbert J."/>
            <person name="Gibson R."/>
            <person name="Gnerre S."/>
            <person name="Goldstein S."/>
            <person name="Grafham D.V."/>
            <person name="Grocock R."/>
            <person name="Hafez N."/>
            <person name="Hagopian D.S."/>
            <person name="Hart E."/>
            <person name="Norman C.H."/>
            <person name="Humphray S."/>
            <person name="Jaffe D.B."/>
            <person name="Jones M."/>
            <person name="Kamal M."/>
            <person name="Khodiyar V.K."/>
            <person name="LaButti K."/>
            <person name="Laird G."/>
            <person name="Lehoczky J."/>
            <person name="Liu X."/>
            <person name="Lokyitsang T."/>
            <person name="Loveland J."/>
            <person name="Lui A."/>
            <person name="Macdonald P."/>
            <person name="Major J.E."/>
            <person name="Matthews L."/>
            <person name="Mauceli E."/>
            <person name="McCarroll S.A."/>
            <person name="Mihalev A.H."/>
            <person name="Mudge J."/>
            <person name="Nguyen C."/>
            <person name="Nicol R."/>
            <person name="O'Leary S.B."/>
            <person name="Osoegawa K."/>
            <person name="Schwartz D.C."/>
            <person name="Shaw-Smith C."/>
            <person name="Stankiewicz P."/>
            <person name="Steward C."/>
            <person name="Swarbreck D."/>
            <person name="Venkataraman V."/>
            <person name="Whittaker C.A."/>
            <person name="Yang X."/>
            <person name="Zimmer A.R."/>
            <person name="Bradley A."/>
            <person name="Hubbard T."/>
            <person name="Birren B.W."/>
            <person name="Rogers J."/>
            <person name="Lander E.S."/>
            <person name="Nusbaum C."/>
        </authorList>
    </citation>
    <scope>NUCLEOTIDE SEQUENCE [LARGE SCALE GENOMIC DNA]</scope>
</reference>
<reference key="5">
    <citation type="submission" date="2005-09" db="EMBL/GenBank/DDBJ databases">
        <authorList>
            <person name="Mural R.J."/>
            <person name="Istrail S."/>
            <person name="Sutton G.G."/>
            <person name="Florea L."/>
            <person name="Halpern A.L."/>
            <person name="Mobarry C.M."/>
            <person name="Lippert R."/>
            <person name="Walenz B."/>
            <person name="Shatkay H."/>
            <person name="Dew I."/>
            <person name="Miller J.R."/>
            <person name="Flanigan M.J."/>
            <person name="Edwards N.J."/>
            <person name="Bolanos R."/>
            <person name="Fasulo D."/>
            <person name="Halldorsson B.V."/>
            <person name="Hannenhalli S."/>
            <person name="Turner R."/>
            <person name="Yooseph S."/>
            <person name="Lu F."/>
            <person name="Nusskern D.R."/>
            <person name="Shue B.C."/>
            <person name="Zheng X.H."/>
            <person name="Zhong F."/>
            <person name="Delcher A.L."/>
            <person name="Huson D.H."/>
            <person name="Kravitz S.A."/>
            <person name="Mouchard L."/>
            <person name="Reinert K."/>
            <person name="Remington K.A."/>
            <person name="Clark A.G."/>
            <person name="Waterman M.S."/>
            <person name="Eichler E.E."/>
            <person name="Adams M.D."/>
            <person name="Hunkapiller M.W."/>
            <person name="Myers E.W."/>
            <person name="Venter J.C."/>
        </authorList>
    </citation>
    <scope>NUCLEOTIDE SEQUENCE [LARGE SCALE GENOMIC DNA]</scope>
</reference>
<reference key="6">
    <citation type="journal article" date="2004" name="Genome Res.">
        <title>The status, quality, and expansion of the NIH full-length cDNA project: the Mammalian Gene Collection (MGC).</title>
        <authorList>
            <consortium name="The MGC Project Team"/>
        </authorList>
    </citation>
    <scope>NUCLEOTIDE SEQUENCE [LARGE SCALE MRNA] (ISOFORMS 1 AND 2)</scope>
    <source>
        <tissue>Bone marrow</tissue>
        <tissue>Lung</tissue>
    </source>
</reference>
<reference key="7">
    <citation type="journal article" date="1998" name="Nature">
        <title>Interaction of polyadenylate-binding protein with the eIF4G homologue PAIP enhances translation.</title>
        <authorList>
            <person name="Craig A.W.B."/>
            <person name="Haghighat A."/>
            <person name="Yu A.T.K."/>
            <person name="Sonenberg N."/>
        </authorList>
    </citation>
    <scope>INTERACTION WITH PAIP1</scope>
</reference>
<reference key="8">
    <citation type="journal article" date="2000" name="Mol. Cell. Biol.">
        <title>Novel Upf2p orthologues suggest a functional link between translation initiation and nonsense surveillance complexes.</title>
        <authorList>
            <person name="Mendell J.T."/>
            <person name="Medghalchi S.M."/>
            <person name="Lake R.G."/>
            <person name="Noensie E.N."/>
            <person name="Dietz H.C."/>
        </authorList>
    </citation>
    <scope>INTERACTION WITH UPF2</scope>
</reference>
<reference key="9">
    <citation type="journal article" date="2001" name="J. Biol. Chem.">
        <title>Eukaryotic initiation factors 4A (eIF4A) and 4G (eIF4G) mutually interact in a 1:1 ratio in vivo.</title>
        <authorList>
            <person name="Li W."/>
            <person name="Belsham G.J."/>
            <person name="Proud C.G."/>
        </authorList>
    </citation>
    <scope>INTERACTION WITH EIF4E</scope>
</reference>
<reference key="10">
    <citation type="journal article" date="2003" name="Nature">
        <title>Proteomic characterization of the human centrosome by protein correlation profiling.</title>
        <authorList>
            <person name="Andersen J.S."/>
            <person name="Wilkinson C.J."/>
            <person name="Mayor T."/>
            <person name="Mortensen P."/>
            <person name="Nigg E.A."/>
            <person name="Mann M."/>
        </authorList>
    </citation>
    <scope>IDENTIFICATION BY MASS SPECTROMETRY</scope>
    <source>
        <tissue>Lymphoblast</tissue>
    </source>
</reference>
<reference key="11">
    <citation type="journal article" date="2004" name="EMBO J.">
        <title>Exportin 7 defines a novel general nuclear export pathway.</title>
        <authorList>
            <person name="Mingot J.-M."/>
            <person name="Bohnsack M.T."/>
            <person name="Jaekle U."/>
            <person name="Goerlich D."/>
        </authorList>
    </citation>
    <scope>IDENTIFICATION IN A COMPLEX WITH XPO7; ARHGAP1; VPS26A; VPS29; VPS35 AND SFN</scope>
</reference>
<reference key="12">
    <citation type="journal article" date="2005" name="Gene">
        <title>Identification of NOM1, a nucleolar, eIF4A binding protein encoded within the chromosome 7q36 breakpoint region targeted in cases of pediatric acute myeloid leukemia.</title>
        <authorList>
            <person name="Simmons H.M."/>
            <person name="Ruis B.L."/>
            <person name="Kapoor M."/>
            <person name="Hudacek A.W."/>
            <person name="Conklin K.F."/>
        </authorList>
    </citation>
    <scope>POSSIBLE INTERACTION WITH NOM1</scope>
</reference>
<reference key="13">
    <citation type="journal article" date="2007" name="Proc. Natl. Acad. Sci. U.S.A.">
        <title>Cell stress modulates the function of splicing regulatory protein RBM4 in translation control.</title>
        <authorList>
            <person name="Lin J.C."/>
            <person name="Hsu M."/>
            <person name="Tarn W.Y."/>
        </authorList>
    </citation>
    <scope>INTERACTION WITH RBM4</scope>
</reference>
<reference key="14">
    <citation type="journal article" date="2008" name="Mol. Biol. Cell">
        <title>The DEAD-box RNA helicase DDX3 associates with export messenger ribonucleoproteins as well as tip-associated protein and participates in translational control.</title>
        <authorList>
            <person name="Lai M.C."/>
            <person name="Lee Y.H."/>
            <person name="Tarn W.Y."/>
        </authorList>
    </citation>
    <scope>INTERACTION WITH DDX3X</scope>
</reference>
<reference key="15">
    <citation type="journal article" date="2008" name="Proc. Natl. Acad. Sci. U.S.A.">
        <title>A quantitative atlas of mitotic phosphorylation.</title>
        <authorList>
            <person name="Dephoure N."/>
            <person name="Zhou C."/>
            <person name="Villen J."/>
            <person name="Beausoleil S.A."/>
            <person name="Bakalarski C.E."/>
            <person name="Elledge S.J."/>
            <person name="Gygi S.P."/>
        </authorList>
    </citation>
    <scope>IDENTIFICATION BY MASS SPECTROMETRY [LARGE SCALE ANALYSIS]</scope>
    <source>
        <tissue>Cervix carcinoma</tissue>
    </source>
</reference>
<reference key="16">
    <citation type="journal article" date="2009" name="Science">
        <title>Lysine acetylation targets protein complexes and co-regulates major cellular functions.</title>
        <authorList>
            <person name="Choudhary C."/>
            <person name="Kumar C."/>
            <person name="Gnad F."/>
            <person name="Nielsen M.L."/>
            <person name="Rehman M."/>
            <person name="Walther T.C."/>
            <person name="Olsen J.V."/>
            <person name="Mann M."/>
        </authorList>
    </citation>
    <scope>ACETYLATION [LARGE SCALE ANALYSIS] AT LYS-118 AND LYS-174</scope>
    <scope>IDENTIFICATION BY MASS SPECTROMETRY [LARGE SCALE ANALYSIS]</scope>
</reference>
<reference key="17">
    <citation type="journal article" date="2010" name="J. Cell Biol.">
        <title>Plakophilin 1 stimulates translation by promoting eIF4A1 activity.</title>
        <authorList>
            <person name="Wolf A."/>
            <person name="Krause-Gruszczynska M."/>
            <person name="Birkenmeier O."/>
            <person name="Ostareck-Lederer A."/>
            <person name="Huettelmaier S."/>
            <person name="Hatzfeld M."/>
        </authorList>
    </citation>
    <scope>FUNCTION</scope>
    <scope>INTERACTION WITH PKP1</scope>
    <scope>SUBCELLULAR LOCATION</scope>
</reference>
<reference key="18">
    <citation type="journal article" date="2010" name="Proc. Natl. Acad. Sci. U.S.A.">
        <title>Human cytomegalovirus UL69 protein facilitates translation by associating with the mRNA cap-binding complex and excluding 4EBP1.</title>
        <authorList>
            <person name="Aoyagi M."/>
            <person name="Gaspar M."/>
            <person name="Shenk T.E."/>
        </authorList>
    </citation>
    <scope>INTERACTION WITH HHV-5 PROTEIN UL69 (MICROBIAL INFECTION)</scope>
</reference>
<reference key="19">
    <citation type="journal article" date="2011" name="BMC Syst. Biol.">
        <title>Initial characterization of the human central proteome.</title>
        <authorList>
            <person name="Burkard T.R."/>
            <person name="Planyavsky M."/>
            <person name="Kaupe I."/>
            <person name="Breitwieser F.P."/>
            <person name="Buerckstuemmer T."/>
            <person name="Bennett K.L."/>
            <person name="Superti-Furga G."/>
            <person name="Colinge J."/>
        </authorList>
    </citation>
    <scope>IDENTIFICATION BY MASS SPECTROMETRY [LARGE SCALE ANALYSIS]</scope>
</reference>
<reference key="20">
    <citation type="journal article" date="2011" name="Sci. Signal.">
        <title>System-wide temporal characterization of the proteome and phosphoproteome of human embryonic stem cell differentiation.</title>
        <authorList>
            <person name="Rigbolt K.T."/>
            <person name="Prokhorova T.A."/>
            <person name="Akimov V."/>
            <person name="Henningsen J."/>
            <person name="Johansen P.T."/>
            <person name="Kratchmarova I."/>
            <person name="Kassem M."/>
            <person name="Mann M."/>
            <person name="Olsen J.V."/>
            <person name="Blagoev B."/>
        </authorList>
    </citation>
    <scope>ACETYLATION [LARGE SCALE ANALYSIS] AT SER-2</scope>
    <scope>PHOSPHORYLATION [LARGE SCALE ANALYSIS] AT SER-4</scope>
    <scope>CLEAVAGE OF INITIATOR METHIONINE [LARGE SCALE ANALYSIS]</scope>
    <scope>IDENTIFICATION BY MASS SPECTROMETRY [LARGE SCALE ANALYSIS]</scope>
</reference>
<reference key="21">
    <citation type="journal article" date="2013" name="J. Cell Sci.">
        <title>Insulin signaling via Akt2 switches plakophilin 1 function from stabilizing cell adhesion to promoting cell proliferation.</title>
        <authorList>
            <person name="Wolf A."/>
            <person name="Rietscher K."/>
            <person name="Glass M."/>
            <person name="Huettelmaier S."/>
            <person name="Schutkowski M."/>
            <person name="Ihling C."/>
            <person name="Sinz A."/>
            <person name="Wingenfeld A."/>
            <person name="Mun A."/>
            <person name="Hatzfeld M."/>
        </authorList>
    </citation>
    <scope>INTERACTION WITH PKP1</scope>
</reference>
<reference key="22">
    <citation type="journal article" date="2013" name="J. Proteome Res.">
        <title>Toward a comprehensive characterization of a human cancer cell phosphoproteome.</title>
        <authorList>
            <person name="Zhou H."/>
            <person name="Di Palma S."/>
            <person name="Preisinger C."/>
            <person name="Peng M."/>
            <person name="Polat A.N."/>
            <person name="Heck A.J."/>
            <person name="Mohammed S."/>
        </authorList>
    </citation>
    <scope>PHOSPHORYLATION [LARGE SCALE ANALYSIS] AT THR-158</scope>
    <scope>IDENTIFICATION BY MASS SPECTROMETRY [LARGE SCALE ANALYSIS]</scope>
    <source>
        <tissue>Cervix carcinoma</tissue>
        <tissue>Erythroleukemia</tissue>
    </source>
</reference>
<reference key="23">
    <citation type="journal article" date="2014" name="J. Proteomics">
        <title>An enzyme assisted RP-RPLC approach for in-depth analysis of human liver phosphoproteome.</title>
        <authorList>
            <person name="Bian Y."/>
            <person name="Song C."/>
            <person name="Cheng K."/>
            <person name="Dong M."/>
            <person name="Wang F."/>
            <person name="Huang J."/>
            <person name="Sun D."/>
            <person name="Wang L."/>
            <person name="Ye M."/>
            <person name="Zou H."/>
        </authorList>
    </citation>
    <scope>IDENTIFICATION BY MASS SPECTROMETRY [LARGE SCALE ANALYSIS]</scope>
    <source>
        <tissue>Liver</tissue>
    </source>
</reference>
<reference key="24">
    <citation type="journal article" date="2015" name="Proteomics">
        <title>N-terminome analysis of the human mitochondrial proteome.</title>
        <authorList>
            <person name="Vaca Jacome A.S."/>
            <person name="Rabilloud T."/>
            <person name="Schaeffer-Reiss C."/>
            <person name="Rompais M."/>
            <person name="Ayoub D."/>
            <person name="Lane L."/>
            <person name="Bairoch A."/>
            <person name="Van Dorsselaer A."/>
            <person name="Carapito C."/>
        </authorList>
    </citation>
    <scope>IDENTIFICATION BY MASS SPECTROMETRY [LARGE SCALE ANALYSIS]</scope>
</reference>
<reference key="25">
    <citation type="journal article" date="2017" name="Nat. Struct. Mol. Biol.">
        <title>Site-specific mapping of the human SUMO proteome reveals co-modification with phosphorylation.</title>
        <authorList>
            <person name="Hendriks I.A."/>
            <person name="Lyon D."/>
            <person name="Young C."/>
            <person name="Jensen L.J."/>
            <person name="Vertegaal A.C."/>
            <person name="Nielsen M.L."/>
        </authorList>
    </citation>
    <scope>SUMOYLATION [LARGE SCALE ANALYSIS] AT LYS-146; LYS-225; LYS-238; LYS-309; LYS-369 AND LYS-381</scope>
    <scope>IDENTIFICATION BY MASS SPECTROMETRY [LARGE SCALE ANALYSIS]</scope>
</reference>
<reference key="26">
    <citation type="journal article" date="2023" name="Life. Sci Alliance">
        <title>N-terminal proteoforms may engage in different protein complexes.</title>
        <authorList>
            <person name="Bogaert A."/>
            <person name="Fijalkowska D."/>
            <person name="Staes A."/>
            <person name="Van de Steene T."/>
            <person name="Vuylsteke M."/>
            <person name="Stadler C."/>
            <person name="Eyckerman S."/>
            <person name="Spirohn K."/>
            <person name="Hao T."/>
            <person name="Calderwood M.A."/>
            <person name="Gevaert K."/>
        </authorList>
    </citation>
    <scope>IDENTIFICATION BY MASS SPECTROMETRY (ISOFORM 3)</scope>
    <scope>CLEAVAGE OF INITIATOR METHIONINE (ISOFORMS 1 AND 3)</scope>
    <scope>ACETYLATION AT SER-2 (ISOFORMS 1 AND 3)</scope>
</reference>
<reference key="27">
    <citation type="journal article" date="2009" name="EMBO J.">
        <title>Structural basis for translational inhibition by the tumour suppressor Pdcd4.</title>
        <authorList>
            <person name="Loh P.G."/>
            <person name="Yang H.S."/>
            <person name="Walsh M.A."/>
            <person name="Wang Q."/>
            <person name="Wang X."/>
            <person name="Cheng Z."/>
            <person name="Liu D."/>
            <person name="Song H."/>
        </authorList>
    </citation>
    <scope>X-RAY CRYSTALLOGRAPHY (3.5 ANGSTROMS) IN COMPLEX WITH PDCD4</scope>
    <scope>FUNCTION</scope>
    <scope>SUBUNIT</scope>
    <scope>ACTIVITY REGULATION</scope>
</reference>
<reference key="28">
    <citation type="journal article" date="2009" name="Proc. Natl. Acad. Sci. U.S.A.">
        <title>Crystal structure of the eIF4A-PDCD4 complex.</title>
        <authorList>
            <person name="Chang J.H."/>
            <person name="Cho Y.H."/>
            <person name="Sohn S.Y."/>
            <person name="Choi J.M."/>
            <person name="Kim A."/>
            <person name="Kim Y.C."/>
            <person name="Jang S.K."/>
            <person name="Cho Y."/>
        </authorList>
    </citation>
    <scope>X-RAY CRYSTALLOGRAPHY (2.8 ANGSTROMS) OF 20-406 IN COMPLEX WITH PDCD4</scope>
    <scope>FUNCTION</scope>
    <scope>ACTIVITY REGULATION</scope>
    <scope>SUBUNIT</scope>
</reference>
<reference key="29">
    <citation type="journal article" date="2010" name="PLoS ONE">
        <title>Comparative structural analysis of human DEAD-box RNA helicases.</title>
        <authorList>
            <person name="Schutz P."/>
            <person name="Karlberg T."/>
            <person name="van den Berg S."/>
            <person name="Collins R."/>
            <person name="Lehtio L."/>
            <person name="Hogbom M."/>
            <person name="Holmberg-Schiavone L."/>
            <person name="Tempel W."/>
            <person name="Park H.W."/>
            <person name="Hammarstrom M."/>
            <person name="Moche M."/>
            <person name="Thorsell A.G."/>
            <person name="Schuler H."/>
        </authorList>
    </citation>
    <scope>X-RAY CRYSTALLOGRAPHY (2.25 ANGSTROMS) OF 20-236</scope>
</reference>
<name>IF4A1_HUMAN</name>
<organism>
    <name type="scientific">Homo sapiens</name>
    <name type="common">Human</name>
    <dbReference type="NCBI Taxonomy" id="9606"/>
    <lineage>
        <taxon>Eukaryota</taxon>
        <taxon>Metazoa</taxon>
        <taxon>Chordata</taxon>
        <taxon>Craniata</taxon>
        <taxon>Vertebrata</taxon>
        <taxon>Euteleostomi</taxon>
        <taxon>Mammalia</taxon>
        <taxon>Eutheria</taxon>
        <taxon>Euarchontoglires</taxon>
        <taxon>Primates</taxon>
        <taxon>Haplorrhini</taxon>
        <taxon>Catarrhini</taxon>
        <taxon>Hominidae</taxon>
        <taxon>Homo</taxon>
    </lineage>
</organism>
<feature type="initiator methionine" description="Removed" evidence="15 20">
    <location>
        <position position="1"/>
    </location>
</feature>
<feature type="chain" id="PRO_0000054933" description="Eukaryotic initiation factor 4A-I">
    <location>
        <begin position="2"/>
        <end position="406"/>
    </location>
</feature>
<feature type="domain" description="Helicase ATP-binding" evidence="2">
    <location>
        <begin position="63"/>
        <end position="234"/>
    </location>
</feature>
<feature type="domain" description="Helicase C-terminal" evidence="3">
    <location>
        <begin position="245"/>
        <end position="406"/>
    </location>
</feature>
<feature type="region of interest" description="Disordered" evidence="4">
    <location>
        <begin position="1"/>
        <end position="21"/>
    </location>
</feature>
<feature type="short sequence motif" description="Q motif">
    <location>
        <begin position="32"/>
        <end position="60"/>
    </location>
</feature>
<feature type="short sequence motif" description="DEAD box">
    <location>
        <begin position="182"/>
        <end position="185"/>
    </location>
</feature>
<feature type="binding site" evidence="2">
    <location>
        <begin position="76"/>
        <end position="83"/>
    </location>
    <ligand>
        <name>ATP</name>
        <dbReference type="ChEBI" id="CHEBI:30616"/>
    </ligand>
</feature>
<feature type="modified residue" description="N-acetylserine" evidence="15 20">
    <location>
        <position position="2"/>
    </location>
</feature>
<feature type="modified residue" description="Phosphoserine" evidence="20">
    <location>
        <position position="4"/>
    </location>
</feature>
<feature type="modified residue" description="N6-acetyllysine" evidence="19">
    <location>
        <position position="118"/>
    </location>
</feature>
<feature type="modified residue" description="Phosphothreonine" evidence="21">
    <location>
        <position position="158"/>
    </location>
</feature>
<feature type="modified residue" description="N6-acetyllysine" evidence="19">
    <location>
        <position position="174"/>
    </location>
</feature>
<feature type="modified residue" description="N6-acetyllysine" evidence="1">
    <location>
        <position position="193"/>
    </location>
</feature>
<feature type="modified residue" description="N6-acetyllysine; alternate" evidence="1">
    <location>
        <position position="238"/>
    </location>
</feature>
<feature type="cross-link" description="Glycyl lysine isopeptide (Lys-Gly) (interchain with G-Cter in SUMO2)" evidence="22">
    <location>
        <position position="146"/>
    </location>
</feature>
<feature type="cross-link" description="Glycyl lysine isopeptide (Lys-Gly) (interchain with G-Cter in SUMO2)" evidence="22">
    <location>
        <position position="225"/>
    </location>
</feature>
<feature type="cross-link" description="Glycyl lysine isopeptide (Lys-Gly) (interchain with G-Cter in SUMO2); alternate" evidence="22">
    <location>
        <position position="238"/>
    </location>
</feature>
<feature type="cross-link" description="Glycyl lysine isopeptide (Lys-Gly) (interchain with G-Cter in SUMO2)" evidence="22">
    <location>
        <position position="309"/>
    </location>
</feature>
<feature type="cross-link" description="Glycyl lysine isopeptide (Lys-Gly) (interchain with G-Cter in SUMO2)" evidence="22">
    <location>
        <position position="369"/>
    </location>
</feature>
<feature type="cross-link" description="Glycyl lysine isopeptide (Lys-Gly) (interchain with G-Cter in SUMO2)" evidence="22">
    <location>
        <position position="381"/>
    </location>
</feature>
<feature type="splice variant" id="VSP_062525" description="In isoform 3." evidence="15">
    <location>
        <begin position="1"/>
        <end position="211"/>
    </location>
</feature>
<feature type="splice variant" id="VSP_062526" description="In isoform 3." evidence="15">
    <original>L</original>
    <variation>M</variation>
    <location>
        <position position="212"/>
    </location>
</feature>
<feature type="splice variant" id="VSP_046032" description="In isoform 2." evidence="17">
    <original>ARGIDVQQVSLVINYDLPTNRENYIHRIGRGGRFGRKGVAINMVTEEDKRTLRDIETFYNTSIEEMPLNVADLI</original>
    <variation>GKLYPQNRSRWTVWP</variation>
    <location>
        <begin position="333"/>
        <end position="406"/>
    </location>
</feature>
<feature type="strand" evidence="27">
    <location>
        <begin position="22"/>
        <end position="26"/>
    </location>
</feature>
<feature type="helix" evidence="25">
    <location>
        <begin position="34"/>
        <end position="36"/>
    </location>
</feature>
<feature type="helix" evidence="25">
    <location>
        <begin position="41"/>
        <end position="50"/>
    </location>
</feature>
<feature type="helix" evidence="25">
    <location>
        <begin position="57"/>
        <end position="67"/>
    </location>
</feature>
<feature type="strand" evidence="25">
    <location>
        <begin position="72"/>
        <end position="75"/>
    </location>
</feature>
<feature type="helix" evidence="27">
    <location>
        <begin position="80"/>
        <end position="82"/>
    </location>
</feature>
<feature type="helix" evidence="25">
    <location>
        <begin position="84"/>
        <end position="93"/>
    </location>
</feature>
<feature type="strand" evidence="25">
    <location>
        <begin position="103"/>
        <end position="106"/>
    </location>
</feature>
<feature type="helix" evidence="25">
    <location>
        <begin position="110"/>
        <end position="117"/>
    </location>
</feature>
<feature type="helix" evidence="25">
    <location>
        <begin position="120"/>
        <end position="123"/>
    </location>
</feature>
<feature type="turn" evidence="25">
    <location>
        <begin position="124"/>
        <end position="128"/>
    </location>
</feature>
<feature type="strand" evidence="25">
    <location>
        <begin position="131"/>
        <end position="134"/>
    </location>
</feature>
<feature type="helix" evidence="25">
    <location>
        <begin position="137"/>
        <end position="139"/>
    </location>
</feature>
<feature type="helix" evidence="25">
    <location>
        <begin position="140"/>
        <end position="145"/>
    </location>
</feature>
<feature type="turn" evidence="24">
    <location>
        <begin position="148"/>
        <end position="150"/>
    </location>
</feature>
<feature type="strand" evidence="25">
    <location>
        <begin position="153"/>
        <end position="157"/>
    </location>
</feature>
<feature type="helix" evidence="25">
    <location>
        <begin position="159"/>
        <end position="167"/>
    </location>
</feature>
<feature type="strand" evidence="25">
    <location>
        <begin position="178"/>
        <end position="183"/>
    </location>
</feature>
<feature type="helix" evidence="25">
    <location>
        <begin position="184"/>
        <end position="189"/>
    </location>
</feature>
<feature type="turn" evidence="26">
    <location>
        <begin position="190"/>
        <end position="192"/>
    </location>
</feature>
<feature type="helix" evidence="25">
    <location>
        <begin position="195"/>
        <end position="201"/>
    </location>
</feature>
<feature type="strand" evidence="25">
    <location>
        <begin position="208"/>
        <end position="214"/>
    </location>
</feature>
<feature type="helix" evidence="25">
    <location>
        <begin position="218"/>
        <end position="224"/>
    </location>
</feature>
<feature type="turn" evidence="24">
    <location>
        <begin position="225"/>
        <end position="227"/>
    </location>
</feature>
<feature type="strand" evidence="25">
    <location>
        <begin position="232"/>
        <end position="235"/>
    </location>
</feature>
<feature type="helix" evidence="26">
    <location>
        <begin position="238"/>
        <end position="240"/>
    </location>
</feature>
<feature type="strand" evidence="23">
    <location>
        <begin position="241"/>
        <end position="243"/>
    </location>
</feature>
<feature type="strand" evidence="26">
    <location>
        <begin position="246"/>
        <end position="255"/>
    </location>
</feature>
<feature type="helix" evidence="26">
    <location>
        <begin position="256"/>
        <end position="258"/>
    </location>
</feature>
<feature type="helix" evidence="26">
    <location>
        <begin position="259"/>
        <end position="265"/>
    </location>
</feature>
<feature type="helix" evidence="26">
    <location>
        <begin position="267"/>
        <end position="270"/>
    </location>
</feature>
<feature type="strand" evidence="26">
    <location>
        <begin position="273"/>
        <end position="278"/>
    </location>
</feature>
<feature type="helix" evidence="26">
    <location>
        <begin position="282"/>
        <end position="294"/>
    </location>
</feature>
<feature type="strand" evidence="26">
    <location>
        <begin position="300"/>
        <end position="302"/>
    </location>
</feature>
<feature type="strand" evidence="23">
    <location>
        <begin position="304"/>
        <end position="306"/>
    </location>
</feature>
<feature type="helix" evidence="26">
    <location>
        <begin position="308"/>
        <end position="319"/>
    </location>
</feature>
<feature type="strand" evidence="23">
    <location>
        <begin position="321"/>
        <end position="323"/>
    </location>
</feature>
<feature type="strand" evidence="26">
    <location>
        <begin position="325"/>
        <end position="328"/>
    </location>
</feature>
<feature type="helix" evidence="26">
    <location>
        <begin position="330"/>
        <end position="332"/>
    </location>
</feature>
<feature type="helix" evidence="24">
    <location>
        <begin position="338"/>
        <end position="340"/>
    </location>
</feature>
<feature type="strand" evidence="26">
    <location>
        <begin position="341"/>
        <end position="348"/>
    </location>
</feature>
<feature type="helix" evidence="26">
    <location>
        <begin position="353"/>
        <end position="360"/>
    </location>
</feature>
<feature type="helix" evidence="26">
    <location>
        <begin position="365"/>
        <end position="367"/>
    </location>
</feature>
<feature type="strand" evidence="26">
    <location>
        <begin position="370"/>
        <end position="377"/>
    </location>
</feature>
<feature type="helix" evidence="26">
    <location>
        <begin position="378"/>
        <end position="391"/>
    </location>
</feature>
<feature type="helix" evidence="26">
    <location>
        <begin position="400"/>
        <end position="404"/>
    </location>
</feature>
<feature type="initiator methionine" description="Removed" evidence="15">
    <location sequence="P60842-3">
        <position position="1"/>
    </location>
</feature>
<feature type="modified residue" description="N-acetylserine" evidence="15">
    <location sequence="P60842-3">
        <position position="2"/>
    </location>
</feature>
<protein>
    <recommendedName>
        <fullName>Eukaryotic initiation factor 4A-I</fullName>
        <shortName>eIF-4A-I</shortName>
        <shortName>eIF4A-I</shortName>
        <ecNumber>3.6.4.13</ecNumber>
    </recommendedName>
    <alternativeName>
        <fullName>ATP-dependent RNA helicase eIF4A-1</fullName>
    </alternativeName>
</protein>
<gene>
    <name type="primary">EIF4A1</name>
    <name type="synonym">DDX2A</name>
    <name type="synonym">EIF4A</name>
</gene>
<proteinExistence type="evidence at protein level"/>
<accession>P60842</accession>
<accession>B2R6L8</accession>
<accession>D3DTP9</accession>
<accession>J3QLC4</accession>
<accession>P04765</accession>
<accession>Q5U018</accession>
<accession>Q61516</accession>
<evidence type="ECO:0000250" key="1">
    <source>
        <dbReference type="UniProtKB" id="P60843"/>
    </source>
</evidence>
<evidence type="ECO:0000255" key="2">
    <source>
        <dbReference type="PROSITE-ProRule" id="PRU00541"/>
    </source>
</evidence>
<evidence type="ECO:0000255" key="3">
    <source>
        <dbReference type="PROSITE-ProRule" id="PRU00542"/>
    </source>
</evidence>
<evidence type="ECO:0000256" key="4">
    <source>
        <dbReference type="SAM" id="MobiDB-lite"/>
    </source>
</evidence>
<evidence type="ECO:0000269" key="5">
    <source>
    </source>
</evidence>
<evidence type="ECO:0000269" key="6">
    <source>
    </source>
</evidence>
<evidence type="ECO:0000269" key="7">
    <source>
    </source>
</evidence>
<evidence type="ECO:0000269" key="8">
    <source>
    </source>
</evidence>
<evidence type="ECO:0000269" key="9">
    <source>
    </source>
</evidence>
<evidence type="ECO:0000269" key="10">
    <source>
    </source>
</evidence>
<evidence type="ECO:0000269" key="11">
    <source>
    </source>
</evidence>
<evidence type="ECO:0000269" key="12">
    <source>
    </source>
</evidence>
<evidence type="ECO:0000269" key="13">
    <source>
    </source>
</evidence>
<evidence type="ECO:0000269" key="14">
    <source>
    </source>
</evidence>
<evidence type="ECO:0000269" key="15">
    <source>
    </source>
</evidence>
<evidence type="ECO:0000269" key="16">
    <source>
    </source>
</evidence>
<evidence type="ECO:0000303" key="17">
    <source>
    </source>
</evidence>
<evidence type="ECO:0000305" key="18"/>
<evidence type="ECO:0007744" key="19">
    <source>
    </source>
</evidence>
<evidence type="ECO:0007744" key="20">
    <source>
    </source>
</evidence>
<evidence type="ECO:0007744" key="21">
    <source>
    </source>
</evidence>
<evidence type="ECO:0007744" key="22">
    <source>
    </source>
</evidence>
<evidence type="ECO:0007829" key="23">
    <source>
        <dbReference type="PDB" id="2ZU6"/>
    </source>
</evidence>
<evidence type="ECO:0007829" key="24">
    <source>
        <dbReference type="PDB" id="3EIQ"/>
    </source>
</evidence>
<evidence type="ECO:0007829" key="25">
    <source>
        <dbReference type="PDB" id="5ZBZ"/>
    </source>
</evidence>
<evidence type="ECO:0007829" key="26">
    <source>
        <dbReference type="PDB" id="5ZC9"/>
    </source>
</evidence>
<evidence type="ECO:0007829" key="27">
    <source>
        <dbReference type="PDB" id="7PPZ"/>
    </source>
</evidence>
<comment type="function">
    <text evidence="10 11 13">ATP-dependent RNA helicase which is a subunit of the eIF4F complex involved in cap recognition and is required for mRNA binding to ribosome (PubMed:20156963). In the current model of translation initiation, eIF4A unwinds RNA secondary structures in the 5'-UTR of mRNAs which is necessary to allow efficient binding of the small ribosomal subunit, and subsequent scanning for the initiator codon. As a result, promotes cell proliferation and growth (PubMed:20156963).</text>
</comment>
<comment type="catalytic activity">
    <reaction>
        <text>ATP + H2O = ADP + phosphate + H(+)</text>
        <dbReference type="Rhea" id="RHEA:13065"/>
        <dbReference type="ChEBI" id="CHEBI:15377"/>
        <dbReference type="ChEBI" id="CHEBI:15378"/>
        <dbReference type="ChEBI" id="CHEBI:30616"/>
        <dbReference type="ChEBI" id="CHEBI:43474"/>
        <dbReference type="ChEBI" id="CHEBI:456216"/>
        <dbReference type="EC" id="3.6.4.13"/>
    </reaction>
</comment>
<comment type="activity regulation">
    <text evidence="10 11">Helicase activity and function in translation are inhibited by interaction with PDCD4.</text>
</comment>
<comment type="subunit">
    <text evidence="5 6 7 8 9 10 11 13 14 16">eIF4F is a multi-subunit complex, the composition of which varies with external and internal environmental conditions. It is composed of at least EIF4A, EIF4E and EIF4G1/EIF4G3. Interacts with PAIP1, EIF4E and UPF2. Found in a complex with XPO7, EIF4A1, ARHGAP1, VPS26A, VPS29, VPS35 and SFN. May interact with NOM1. Interacts with PDCD4; this interferes with the interaction between EIF4A and EIF4G. Interacts with RBM4. Interacts with DDX3X in an RNA-independent manner (PubMed:18596238). Interacts with PKP1 (via N-terminus); the interaction promotes EIF4A1 recruitment to the cap-dependent translation complex and EIF4A1 ATPase activity (PubMed:20156963, PubMed:23444369).</text>
</comment>
<comment type="subunit">
    <text evidence="12">(Microbial infection) Interacts with human cytomegalovirus/HHV-5 protein UL69.</text>
</comment>
<comment type="interaction">
    <interactant intactId="EBI-73449">
        <id>P60842</id>
    </interactant>
    <interactant intactId="EBI-73711">
        <id>Q04637</id>
        <label>EIF4G1</label>
    </interactant>
    <organismsDiffer>false</organismsDiffer>
    <experiments>13</experiments>
</comment>
<comment type="interaction">
    <interactant intactId="EBI-73449">
        <id>P60842</id>
    </interactant>
    <interactant intactId="EBI-5456295">
        <id>Q04637-1</id>
        <label>EIF4G1</label>
    </interactant>
    <organismsDiffer>false</organismsDiffer>
    <experiments>2</experiments>
</comment>
<comment type="interaction">
    <interactant intactId="EBI-73449">
        <id>P60842</id>
    </interactant>
    <interactant intactId="EBI-296519">
        <id>P78344</id>
        <label>EIF4G2</label>
    </interactant>
    <organismsDiffer>false</organismsDiffer>
    <experiments>5</experiments>
</comment>
<comment type="interaction">
    <interactant intactId="EBI-73449">
        <id>P60842</id>
    </interactant>
    <interactant intactId="EBI-16040248">
        <id>P78344-1</id>
        <label>EIF4G2</label>
    </interactant>
    <organismsDiffer>false</organismsDiffer>
    <experiments>3</experiments>
</comment>
<comment type="interaction">
    <interactant intactId="EBI-73449">
        <id>P60842</id>
    </interactant>
    <interactant intactId="EBI-748492">
        <id>Q15056</id>
        <label>EIF4H</label>
    </interactant>
    <organismsDiffer>false</organismsDiffer>
    <experiments>2</experiments>
</comment>
<comment type="interaction">
    <interactant intactId="EBI-73449">
        <id>P60842</id>
    </interactant>
    <interactant intactId="EBI-935824">
        <id>Q53EL6</id>
        <label>PDCD4</label>
    </interactant>
    <organismsDiffer>false</organismsDiffer>
    <experiments>10</experiments>
</comment>
<comment type="interaction">
    <interactant intactId="EBI-73449">
        <id>P60842</id>
    </interactant>
    <interactant intactId="EBI-15621561">
        <id>Q9BWF3-1</id>
        <label>RBM4</label>
    </interactant>
    <organismsDiffer>false</organismsDiffer>
    <experiments>3</experiments>
</comment>
<comment type="subcellular location">
    <subcellularLocation>
        <location evidence="13">Cytoplasm</location>
        <location evidence="13">Perinuclear region</location>
    </subcellularLocation>
    <subcellularLocation>
        <location evidence="13">Cell membrane</location>
    </subcellularLocation>
    <subcellularLocation>
        <location evidence="13">Cytoplasm</location>
        <location evidence="13">Stress granule</location>
    </subcellularLocation>
    <text evidence="13">Colocalizes with PKP1 in stress granules following arsenate or hydrogen peroxide treatment.</text>
</comment>
<comment type="alternative products">
    <event type="alternative splicing"/>
    <isoform>
        <id>P60842-1</id>
        <name>1</name>
        <sequence type="displayed"/>
    </isoform>
    <isoform>
        <id>P60842-2</id>
        <name>2</name>
        <sequence type="described" ref="VSP_046032"/>
    </isoform>
    <isoform>
        <id>P60842-3</id>
        <name>3</name>
        <sequence type="described" ref="VSP_062525 VSP_062526"/>
    </isoform>
</comment>
<comment type="similarity">
    <text evidence="18">Belongs to the DEAD box helicase family. eIF4A subfamily.</text>
</comment>